<evidence type="ECO:0000255" key="1">
    <source>
        <dbReference type="HAMAP-Rule" id="MF_00270"/>
    </source>
</evidence>
<evidence type="ECO:0000305" key="2"/>
<organism>
    <name type="scientific">Roseiflexus sp. (strain RS-1)</name>
    <dbReference type="NCBI Taxonomy" id="357808"/>
    <lineage>
        <taxon>Bacteria</taxon>
        <taxon>Bacillati</taxon>
        <taxon>Chloroflexota</taxon>
        <taxon>Chloroflexia</taxon>
        <taxon>Chloroflexales</taxon>
        <taxon>Roseiflexineae</taxon>
        <taxon>Roseiflexaceae</taxon>
        <taxon>Roseiflexus</taxon>
    </lineage>
</organism>
<protein>
    <recommendedName>
        <fullName evidence="1">Small ribosomal subunit protein bS18B</fullName>
    </recommendedName>
    <alternativeName>
        <fullName evidence="2">30S ribosomal protein S18 2</fullName>
    </alternativeName>
</protein>
<comment type="function">
    <text evidence="1">Binds as a heterodimer with protein bS6 to the central domain of the 16S rRNA, where it helps stabilize the platform of the 30S subunit.</text>
</comment>
<comment type="subunit">
    <text evidence="1">Part of the 30S ribosomal subunit. Forms a tight heterodimer with protein bS6.</text>
</comment>
<comment type="similarity">
    <text evidence="1">Belongs to the bacterial ribosomal protein bS18 family.</text>
</comment>
<proteinExistence type="inferred from homology"/>
<sequence length="90" mass="10450">MTEDQARRSGGVGRRRFGARRKVCMFCADQIRVVDYKDVKRLQRCMSERGKILPRRRTGVCARHQRSLTVAIKRARHMALLPFVAAHIRS</sequence>
<reference key="1">
    <citation type="submission" date="2007-04" db="EMBL/GenBank/DDBJ databases">
        <title>Complete sequence of Roseiflexus sp. RS-1.</title>
        <authorList>
            <consortium name="US DOE Joint Genome Institute"/>
            <person name="Copeland A."/>
            <person name="Lucas S."/>
            <person name="Lapidus A."/>
            <person name="Barry K."/>
            <person name="Detter J.C."/>
            <person name="Glavina del Rio T."/>
            <person name="Hammon N."/>
            <person name="Israni S."/>
            <person name="Dalin E."/>
            <person name="Tice H."/>
            <person name="Pitluck S."/>
            <person name="Chertkov O."/>
            <person name="Brettin T."/>
            <person name="Bruce D."/>
            <person name="Han C."/>
            <person name="Schmutz J."/>
            <person name="Larimer F."/>
            <person name="Land M."/>
            <person name="Hauser L."/>
            <person name="Kyrpides N."/>
            <person name="Mikhailova N."/>
            <person name="Bryant D.A."/>
            <person name="Richardson P."/>
        </authorList>
    </citation>
    <scope>NUCLEOTIDE SEQUENCE [LARGE SCALE GENOMIC DNA]</scope>
    <source>
        <strain>RS-1</strain>
    </source>
</reference>
<dbReference type="EMBL" id="CP000686">
    <property type="protein sequence ID" value="ABQ91758.1"/>
    <property type="molecule type" value="Genomic_DNA"/>
</dbReference>
<dbReference type="SMR" id="A5UYQ5"/>
<dbReference type="STRING" id="357808.RoseRS_3400"/>
<dbReference type="KEGG" id="rrs:RoseRS_3400"/>
<dbReference type="eggNOG" id="COG0238">
    <property type="taxonomic scope" value="Bacteria"/>
</dbReference>
<dbReference type="HOGENOM" id="CLU_148710_0_3_0"/>
<dbReference type="OrthoDB" id="9812008at2"/>
<dbReference type="Proteomes" id="UP000006554">
    <property type="component" value="Chromosome"/>
</dbReference>
<dbReference type="GO" id="GO:0022627">
    <property type="term" value="C:cytosolic small ribosomal subunit"/>
    <property type="evidence" value="ECO:0007669"/>
    <property type="project" value="TreeGrafter"/>
</dbReference>
<dbReference type="GO" id="GO:0070181">
    <property type="term" value="F:small ribosomal subunit rRNA binding"/>
    <property type="evidence" value="ECO:0007669"/>
    <property type="project" value="TreeGrafter"/>
</dbReference>
<dbReference type="GO" id="GO:0003735">
    <property type="term" value="F:structural constituent of ribosome"/>
    <property type="evidence" value="ECO:0007669"/>
    <property type="project" value="InterPro"/>
</dbReference>
<dbReference type="GO" id="GO:0006412">
    <property type="term" value="P:translation"/>
    <property type="evidence" value="ECO:0007669"/>
    <property type="project" value="UniProtKB-UniRule"/>
</dbReference>
<dbReference type="Gene3D" id="4.10.640.10">
    <property type="entry name" value="Ribosomal protein S18"/>
    <property type="match status" value="1"/>
</dbReference>
<dbReference type="HAMAP" id="MF_00270">
    <property type="entry name" value="Ribosomal_bS18"/>
    <property type="match status" value="1"/>
</dbReference>
<dbReference type="InterPro" id="IPR001648">
    <property type="entry name" value="Ribosomal_bS18"/>
</dbReference>
<dbReference type="InterPro" id="IPR036870">
    <property type="entry name" value="Ribosomal_bS18_sf"/>
</dbReference>
<dbReference type="NCBIfam" id="TIGR00165">
    <property type="entry name" value="S18"/>
    <property type="match status" value="1"/>
</dbReference>
<dbReference type="PANTHER" id="PTHR13479">
    <property type="entry name" value="30S RIBOSOMAL PROTEIN S18"/>
    <property type="match status" value="1"/>
</dbReference>
<dbReference type="PANTHER" id="PTHR13479:SF40">
    <property type="entry name" value="SMALL RIBOSOMAL SUBUNIT PROTEIN BS18M"/>
    <property type="match status" value="1"/>
</dbReference>
<dbReference type="Pfam" id="PF01084">
    <property type="entry name" value="Ribosomal_S18"/>
    <property type="match status" value="1"/>
</dbReference>
<dbReference type="PRINTS" id="PR00974">
    <property type="entry name" value="RIBOSOMALS18"/>
</dbReference>
<dbReference type="SUPFAM" id="SSF46911">
    <property type="entry name" value="Ribosomal protein S18"/>
    <property type="match status" value="1"/>
</dbReference>
<gene>
    <name evidence="1" type="primary">rpsR2</name>
    <name type="ordered locus">RoseRS_3400</name>
</gene>
<keyword id="KW-0687">Ribonucleoprotein</keyword>
<keyword id="KW-0689">Ribosomal protein</keyword>
<keyword id="KW-0694">RNA-binding</keyword>
<keyword id="KW-0699">rRNA-binding</keyword>
<accession>A5UYQ5</accession>
<name>RS182_ROSS1</name>
<feature type="chain" id="PRO_0000345538" description="Small ribosomal subunit protein bS18B">
    <location>
        <begin position="1"/>
        <end position="90"/>
    </location>
</feature>